<gene>
    <name evidence="1" type="primary">rbfA</name>
    <name type="ordered locus">CC_0037</name>
</gene>
<accession>Q9AC30</accession>
<proteinExistence type="inferred from homology"/>
<sequence>MKRQSDPKKGALTGPSQRQLRAGELIRHALVEILREEELQDEALQNISVTVSEVRMSPDLKHAICFVEPLGAGLTGQDTTDIIKGLNRVSKFLRGRLGRSIDMKFTPDLKFIHDESFGTAAYMDKLFLDPRVQQDTRRLSDVVDDEDEA</sequence>
<reference key="1">
    <citation type="journal article" date="2001" name="Proc. Natl. Acad. Sci. U.S.A.">
        <title>Complete genome sequence of Caulobacter crescentus.</title>
        <authorList>
            <person name="Nierman W.C."/>
            <person name="Feldblyum T.V."/>
            <person name="Laub M.T."/>
            <person name="Paulsen I.T."/>
            <person name="Nelson K.E."/>
            <person name="Eisen J.A."/>
            <person name="Heidelberg J.F."/>
            <person name="Alley M.R.K."/>
            <person name="Ohta N."/>
            <person name="Maddock J.R."/>
            <person name="Potocka I."/>
            <person name="Nelson W.C."/>
            <person name="Newton A."/>
            <person name="Stephens C."/>
            <person name="Phadke N.D."/>
            <person name="Ely B."/>
            <person name="DeBoy R.T."/>
            <person name="Dodson R.J."/>
            <person name="Durkin A.S."/>
            <person name="Gwinn M.L."/>
            <person name="Haft D.H."/>
            <person name="Kolonay J.F."/>
            <person name="Smit J."/>
            <person name="Craven M.B."/>
            <person name="Khouri H.M."/>
            <person name="Shetty J."/>
            <person name="Berry K.J."/>
            <person name="Utterback T.R."/>
            <person name="Tran K."/>
            <person name="Wolf A.M."/>
            <person name="Vamathevan J.J."/>
            <person name="Ermolaeva M.D."/>
            <person name="White O."/>
            <person name="Salzberg S.L."/>
            <person name="Venter J.C."/>
            <person name="Shapiro L."/>
            <person name="Fraser C.M."/>
        </authorList>
    </citation>
    <scope>NUCLEOTIDE SEQUENCE [LARGE SCALE GENOMIC DNA]</scope>
    <source>
        <strain>ATCC 19089 / CIP 103742 / CB 15</strain>
    </source>
</reference>
<protein>
    <recommendedName>
        <fullName evidence="1">Ribosome-binding factor A</fullName>
    </recommendedName>
</protein>
<organism>
    <name type="scientific">Caulobacter vibrioides (strain ATCC 19089 / CIP 103742 / CB 15)</name>
    <name type="common">Caulobacter crescentus</name>
    <dbReference type="NCBI Taxonomy" id="190650"/>
    <lineage>
        <taxon>Bacteria</taxon>
        <taxon>Pseudomonadati</taxon>
        <taxon>Pseudomonadota</taxon>
        <taxon>Alphaproteobacteria</taxon>
        <taxon>Caulobacterales</taxon>
        <taxon>Caulobacteraceae</taxon>
        <taxon>Caulobacter</taxon>
    </lineage>
</organism>
<keyword id="KW-0963">Cytoplasm</keyword>
<keyword id="KW-1185">Reference proteome</keyword>
<keyword id="KW-0690">Ribosome biogenesis</keyword>
<name>RBFA_CAUVC</name>
<comment type="function">
    <text evidence="1">One of several proteins that assist in the late maturation steps of the functional core of the 30S ribosomal subunit. Associates with free 30S ribosomal subunits (but not with 30S subunits that are part of 70S ribosomes or polysomes). Required for efficient processing of 16S rRNA. May interact with the 5'-terminal helix region of 16S rRNA.</text>
</comment>
<comment type="subunit">
    <text evidence="1">Monomer. Binds 30S ribosomal subunits, but not 50S ribosomal subunits or 70S ribosomes.</text>
</comment>
<comment type="subcellular location">
    <subcellularLocation>
        <location evidence="1">Cytoplasm</location>
    </subcellularLocation>
</comment>
<comment type="similarity">
    <text evidence="1">Belongs to the RbfA family.</text>
</comment>
<evidence type="ECO:0000255" key="1">
    <source>
        <dbReference type="HAMAP-Rule" id="MF_00003"/>
    </source>
</evidence>
<feature type="chain" id="PRO_0000102642" description="Ribosome-binding factor A">
    <location>
        <begin position="1"/>
        <end position="149"/>
    </location>
</feature>
<dbReference type="EMBL" id="AE005673">
    <property type="protein sequence ID" value="AAK22025.1"/>
    <property type="molecule type" value="Genomic_DNA"/>
</dbReference>
<dbReference type="PIR" id="E87253">
    <property type="entry name" value="E87253"/>
</dbReference>
<dbReference type="RefSeq" id="NP_418857.1">
    <property type="nucleotide sequence ID" value="NC_002696.2"/>
</dbReference>
<dbReference type="RefSeq" id="WP_010917927.1">
    <property type="nucleotide sequence ID" value="NC_002696.2"/>
</dbReference>
<dbReference type="SMR" id="Q9AC30"/>
<dbReference type="STRING" id="190650.CC_0037"/>
<dbReference type="EnsemblBacteria" id="AAK22025">
    <property type="protein sequence ID" value="AAK22025"/>
    <property type="gene ID" value="CC_0037"/>
</dbReference>
<dbReference type="KEGG" id="ccr:CC_0037"/>
<dbReference type="PATRIC" id="fig|190650.5.peg.37"/>
<dbReference type="eggNOG" id="COG0858">
    <property type="taxonomic scope" value="Bacteria"/>
</dbReference>
<dbReference type="HOGENOM" id="CLU_089475_1_0_5"/>
<dbReference type="BioCyc" id="CAULO:CC0037-MONOMER"/>
<dbReference type="Proteomes" id="UP000001816">
    <property type="component" value="Chromosome"/>
</dbReference>
<dbReference type="GO" id="GO:0005829">
    <property type="term" value="C:cytosol"/>
    <property type="evidence" value="ECO:0007669"/>
    <property type="project" value="TreeGrafter"/>
</dbReference>
<dbReference type="GO" id="GO:0043024">
    <property type="term" value="F:ribosomal small subunit binding"/>
    <property type="evidence" value="ECO:0007669"/>
    <property type="project" value="TreeGrafter"/>
</dbReference>
<dbReference type="GO" id="GO:0030490">
    <property type="term" value="P:maturation of SSU-rRNA"/>
    <property type="evidence" value="ECO:0007669"/>
    <property type="project" value="UniProtKB-UniRule"/>
</dbReference>
<dbReference type="Gene3D" id="3.30.300.20">
    <property type="match status" value="1"/>
</dbReference>
<dbReference type="HAMAP" id="MF_00003">
    <property type="entry name" value="RbfA"/>
    <property type="match status" value="1"/>
</dbReference>
<dbReference type="InterPro" id="IPR015946">
    <property type="entry name" value="KH_dom-like_a/b"/>
</dbReference>
<dbReference type="InterPro" id="IPR000238">
    <property type="entry name" value="RbfA"/>
</dbReference>
<dbReference type="InterPro" id="IPR023799">
    <property type="entry name" value="RbfA_dom_sf"/>
</dbReference>
<dbReference type="InterPro" id="IPR020053">
    <property type="entry name" value="Ribosome-bd_factorA_CS"/>
</dbReference>
<dbReference type="NCBIfam" id="NF001802">
    <property type="entry name" value="PRK00521.2-5"/>
    <property type="match status" value="1"/>
</dbReference>
<dbReference type="NCBIfam" id="TIGR00082">
    <property type="entry name" value="rbfA"/>
    <property type="match status" value="1"/>
</dbReference>
<dbReference type="PANTHER" id="PTHR33515">
    <property type="entry name" value="RIBOSOME-BINDING FACTOR A, CHLOROPLASTIC-RELATED"/>
    <property type="match status" value="1"/>
</dbReference>
<dbReference type="PANTHER" id="PTHR33515:SF1">
    <property type="entry name" value="RIBOSOME-BINDING FACTOR A, CHLOROPLASTIC-RELATED"/>
    <property type="match status" value="1"/>
</dbReference>
<dbReference type="Pfam" id="PF02033">
    <property type="entry name" value="RBFA"/>
    <property type="match status" value="1"/>
</dbReference>
<dbReference type="SUPFAM" id="SSF89919">
    <property type="entry name" value="Ribosome-binding factor A, RbfA"/>
    <property type="match status" value="1"/>
</dbReference>
<dbReference type="PROSITE" id="PS01319">
    <property type="entry name" value="RBFA"/>
    <property type="match status" value="1"/>
</dbReference>